<reference key="1">
    <citation type="submission" date="2005-06" db="EMBL/GenBank/DDBJ databases">
        <title>DNA sequences of macaque genes expressed in brain or testis and its evolutionary implications.</title>
        <authorList>
            <consortium name="International consortium for macaque cDNA sequencing and analysis"/>
        </authorList>
    </citation>
    <scope>NUCLEOTIDE SEQUENCE [LARGE SCALE MRNA]</scope>
    <source>
        <tissue>Testis</tissue>
    </source>
</reference>
<accession>Q4R5U9</accession>
<gene>
    <name type="primary">SNX7</name>
    <name type="ORF">QtsA-20671</name>
</gene>
<sequence>MDMNSFSPMMPTSPLSMINQIKFEDEPDLKDLFITVDEPESHVTTIETFITYRIITKTSRGEFDSSEFEVRRRYQDFLWLKGKLEEAHPTLIIPPLPEKFIVKGMVERFNDDFIETRRKALHKFLNRIADHPTLTFNEDFKIFLTAQAWELSSHKKQGPGLLSRMGQTVRAVASSMRGVKNRPEEFMEMNNFIELFSQKINLIDKISQRIYKEEREYFDEMKEYGPIHILWSASEEDLVDTLKDVAGCIDRCCKATEKRMSGLSEALLPVVREYVLYSEMLMGVMKRRDQIQAELDSKVEALTYKKTDTDLLPEEIGKLEDKVECANNALKADWERWKQNMQNDIKLAFTDMAEENIHYYEQCLATWESFLTSQTNLHLEETSEDKP</sequence>
<comment type="function">
    <text evidence="5">Involved in the regulation of endocytosis and in several stages of intracellular trafficking. Together with SNX4, involved in autophagosome assembly by regulating trafficking and recycling of phospholipid scramblase ATG9A.</text>
</comment>
<comment type="subunit">
    <text evidence="5">Heterodimer; heterodimerizes with SNX4.</text>
</comment>
<comment type="subcellular location">
    <subcellularLocation>
        <location evidence="5">Early endosome membrane</location>
        <topology evidence="1">Peripheral membrane protein</topology>
        <orientation evidence="1">Cytoplasmic side</orientation>
    </subcellularLocation>
</comment>
<comment type="similarity">
    <text evidence="8">Belongs to the sorting nexin family.</text>
</comment>
<feature type="chain" id="PRO_0000213849" description="Sorting nexin-7">
    <location>
        <begin position="1"/>
        <end position="387"/>
    </location>
</feature>
<feature type="domain" description="PX" evidence="6">
    <location>
        <begin position="30"/>
        <end position="151"/>
    </location>
</feature>
<feature type="domain" description="BAR" evidence="7">
    <location>
        <begin position="178"/>
        <end position="387"/>
    </location>
</feature>
<feature type="binding site" evidence="2">
    <location>
        <position position="73"/>
    </location>
    <ligand>
        <name>a 1,2-diacyl-sn-glycero-3-phospho-(1D-myo-inositol-3-phosphate)</name>
        <dbReference type="ChEBI" id="CHEBI:58088"/>
    </ligand>
</feature>
<feature type="binding site" evidence="2">
    <location>
        <position position="75"/>
    </location>
    <ligand>
        <name>a 1,2-diacyl-sn-glycero-3-phospho-(1D-myo-inositol-3-phosphate)</name>
        <dbReference type="ChEBI" id="CHEBI:58088"/>
    </ligand>
</feature>
<feature type="binding site" evidence="4">
    <location>
        <position position="103"/>
    </location>
    <ligand>
        <name>a 1,2-diacyl-sn-glycero-3-phospho-(1D-myo-inositol-3-phosphate)</name>
        <dbReference type="ChEBI" id="CHEBI:58088"/>
    </ligand>
</feature>
<feature type="binding site" evidence="3">
    <location>
        <position position="117"/>
    </location>
    <ligand>
        <name>a 1,2-diacyl-sn-glycero-3-phospho-(1D-myo-inositol-3-phosphate)</name>
        <dbReference type="ChEBI" id="CHEBI:58088"/>
    </ligand>
</feature>
<protein>
    <recommendedName>
        <fullName>Sorting nexin-7</fullName>
    </recommendedName>
</protein>
<proteinExistence type="evidence at transcript level"/>
<name>SNX7_MACFA</name>
<evidence type="ECO:0000250" key="1">
    <source>
        <dbReference type="UniProtKB" id="O95219"/>
    </source>
</evidence>
<evidence type="ECO:0000250" key="2">
    <source>
        <dbReference type="UniProtKB" id="Q3UR97"/>
    </source>
</evidence>
<evidence type="ECO:0000250" key="3">
    <source>
        <dbReference type="UniProtKB" id="Q6P4T1"/>
    </source>
</evidence>
<evidence type="ECO:0000250" key="4">
    <source>
        <dbReference type="UniProtKB" id="Q96L94"/>
    </source>
</evidence>
<evidence type="ECO:0000250" key="5">
    <source>
        <dbReference type="UniProtKB" id="Q9UNH6"/>
    </source>
</evidence>
<evidence type="ECO:0000255" key="6">
    <source>
        <dbReference type="PROSITE-ProRule" id="PRU00147"/>
    </source>
</evidence>
<evidence type="ECO:0000255" key="7">
    <source>
        <dbReference type="PROSITE-ProRule" id="PRU00361"/>
    </source>
</evidence>
<evidence type="ECO:0000305" key="8"/>
<keyword id="KW-0967">Endosome</keyword>
<keyword id="KW-0446">Lipid-binding</keyword>
<keyword id="KW-0472">Membrane</keyword>
<keyword id="KW-0653">Protein transport</keyword>
<keyword id="KW-1185">Reference proteome</keyword>
<keyword id="KW-0813">Transport</keyword>
<dbReference type="EMBL" id="AB169444">
    <property type="protein sequence ID" value="BAE01526.1"/>
    <property type="molecule type" value="mRNA"/>
</dbReference>
<dbReference type="SMR" id="Q4R5U9"/>
<dbReference type="STRING" id="9541.ENSMFAP00000013332"/>
<dbReference type="eggNOG" id="KOG2273">
    <property type="taxonomic scope" value="Eukaryota"/>
</dbReference>
<dbReference type="Proteomes" id="UP000233100">
    <property type="component" value="Unplaced"/>
</dbReference>
<dbReference type="GO" id="GO:0005769">
    <property type="term" value="C:early endosome"/>
    <property type="evidence" value="ECO:0000250"/>
    <property type="project" value="UniProtKB"/>
</dbReference>
<dbReference type="GO" id="GO:0031901">
    <property type="term" value="C:early endosome membrane"/>
    <property type="evidence" value="ECO:0007669"/>
    <property type="project" value="UniProtKB-SubCell"/>
</dbReference>
<dbReference type="GO" id="GO:0000407">
    <property type="term" value="C:phagophore assembly site"/>
    <property type="evidence" value="ECO:0007669"/>
    <property type="project" value="TreeGrafter"/>
</dbReference>
<dbReference type="GO" id="GO:0035091">
    <property type="term" value="F:phosphatidylinositol binding"/>
    <property type="evidence" value="ECO:0007669"/>
    <property type="project" value="InterPro"/>
</dbReference>
<dbReference type="GO" id="GO:0000422">
    <property type="term" value="P:autophagy of mitochondrion"/>
    <property type="evidence" value="ECO:0007669"/>
    <property type="project" value="TreeGrafter"/>
</dbReference>
<dbReference type="GO" id="GO:0032456">
    <property type="term" value="P:endocytic recycling"/>
    <property type="evidence" value="ECO:0007669"/>
    <property type="project" value="TreeGrafter"/>
</dbReference>
<dbReference type="GO" id="GO:0034727">
    <property type="term" value="P:piecemeal microautophagy of the nucleus"/>
    <property type="evidence" value="ECO:0007669"/>
    <property type="project" value="TreeGrafter"/>
</dbReference>
<dbReference type="GO" id="GO:2000786">
    <property type="term" value="P:positive regulation of autophagosome assembly"/>
    <property type="evidence" value="ECO:0000250"/>
    <property type="project" value="UniProtKB"/>
</dbReference>
<dbReference type="GO" id="GO:0015031">
    <property type="term" value="P:protein transport"/>
    <property type="evidence" value="ECO:0000250"/>
    <property type="project" value="UniProtKB"/>
</dbReference>
<dbReference type="GO" id="GO:0061709">
    <property type="term" value="P:reticulophagy"/>
    <property type="evidence" value="ECO:0007669"/>
    <property type="project" value="TreeGrafter"/>
</dbReference>
<dbReference type="CDD" id="cd07666">
    <property type="entry name" value="BAR_SNX7"/>
    <property type="match status" value="1"/>
</dbReference>
<dbReference type="CDD" id="cd07284">
    <property type="entry name" value="PX_SNX7"/>
    <property type="match status" value="1"/>
</dbReference>
<dbReference type="Gene3D" id="1.20.1270.60">
    <property type="entry name" value="Arfaptin homology (AH) domain/BAR domain"/>
    <property type="match status" value="1"/>
</dbReference>
<dbReference type="Gene3D" id="3.30.1520.10">
    <property type="entry name" value="Phox-like domain"/>
    <property type="match status" value="1"/>
</dbReference>
<dbReference type="InterPro" id="IPR027267">
    <property type="entry name" value="AH/BAR_dom_sf"/>
</dbReference>
<dbReference type="InterPro" id="IPR042131">
    <property type="entry name" value="BAR_SNX7"/>
</dbReference>
<dbReference type="InterPro" id="IPR001683">
    <property type="entry name" value="PX_dom"/>
</dbReference>
<dbReference type="InterPro" id="IPR036871">
    <property type="entry name" value="PX_dom_sf"/>
</dbReference>
<dbReference type="InterPro" id="IPR042130">
    <property type="entry name" value="PX_SNX7"/>
</dbReference>
<dbReference type="PANTHER" id="PTHR45949">
    <property type="entry name" value="SORTING NEXIN-4"/>
    <property type="match status" value="1"/>
</dbReference>
<dbReference type="PANTHER" id="PTHR45949:SF3">
    <property type="entry name" value="SORTING NEXIN-7"/>
    <property type="match status" value="1"/>
</dbReference>
<dbReference type="Pfam" id="PF00787">
    <property type="entry name" value="PX"/>
    <property type="match status" value="1"/>
</dbReference>
<dbReference type="SMART" id="SM00312">
    <property type="entry name" value="PX"/>
    <property type="match status" value="1"/>
</dbReference>
<dbReference type="SUPFAM" id="SSF64268">
    <property type="entry name" value="PX domain"/>
    <property type="match status" value="1"/>
</dbReference>
<dbReference type="PROSITE" id="PS50195">
    <property type="entry name" value="PX"/>
    <property type="match status" value="1"/>
</dbReference>
<organism>
    <name type="scientific">Macaca fascicularis</name>
    <name type="common">Crab-eating macaque</name>
    <name type="synonym">Cynomolgus monkey</name>
    <dbReference type="NCBI Taxonomy" id="9541"/>
    <lineage>
        <taxon>Eukaryota</taxon>
        <taxon>Metazoa</taxon>
        <taxon>Chordata</taxon>
        <taxon>Craniata</taxon>
        <taxon>Vertebrata</taxon>
        <taxon>Euteleostomi</taxon>
        <taxon>Mammalia</taxon>
        <taxon>Eutheria</taxon>
        <taxon>Euarchontoglires</taxon>
        <taxon>Primates</taxon>
        <taxon>Haplorrhini</taxon>
        <taxon>Catarrhini</taxon>
        <taxon>Cercopithecidae</taxon>
        <taxon>Cercopithecinae</taxon>
        <taxon>Macaca</taxon>
    </lineage>
</organism>